<feature type="chain" id="PRO_0000303194" description="Mediator of RNA polymerase II transcription subunit 7">
    <location>
        <begin position="1"/>
        <end position="261"/>
    </location>
</feature>
<feature type="region of interest" description="Disordered" evidence="2">
    <location>
        <begin position="1"/>
        <end position="56"/>
    </location>
</feature>
<feature type="region of interest" description="Disordered" evidence="2">
    <location>
        <begin position="99"/>
        <end position="121"/>
    </location>
</feature>
<feature type="region of interest" description="Disordered" evidence="2">
    <location>
        <begin position="223"/>
        <end position="244"/>
    </location>
</feature>
<feature type="compositionally biased region" description="Basic and acidic residues" evidence="2">
    <location>
        <begin position="23"/>
        <end position="46"/>
    </location>
</feature>
<feature type="compositionally biased region" description="Basic and acidic residues" evidence="2">
    <location>
        <begin position="234"/>
        <end position="244"/>
    </location>
</feature>
<name>MED7_ASPOR</name>
<accession>Q2UHU3</accession>
<gene>
    <name type="primary">med7</name>
    <name type="ORF">AO090023000309</name>
</gene>
<keyword id="KW-0010">Activator</keyword>
<keyword id="KW-0539">Nucleus</keyword>
<keyword id="KW-1185">Reference proteome</keyword>
<keyword id="KW-0804">Transcription</keyword>
<keyword id="KW-0805">Transcription regulation</keyword>
<protein>
    <recommendedName>
        <fullName>Mediator of RNA polymerase II transcription subunit 7</fullName>
    </recommendedName>
    <alternativeName>
        <fullName>Mediator complex subunit 7</fullName>
    </alternativeName>
</protein>
<dbReference type="EMBL" id="BA000051">
    <property type="protein sequence ID" value="BAE58872.1"/>
    <property type="molecule type" value="Genomic_DNA"/>
</dbReference>
<dbReference type="RefSeq" id="XP_001820874.1">
    <property type="nucleotide sequence ID" value="XM_001820822.1"/>
</dbReference>
<dbReference type="SMR" id="Q2UHU3"/>
<dbReference type="STRING" id="510516.Q2UHU3"/>
<dbReference type="EnsemblFungi" id="BAE58872">
    <property type="protein sequence ID" value="BAE58872"/>
    <property type="gene ID" value="AO090023000309"/>
</dbReference>
<dbReference type="GeneID" id="5992876"/>
<dbReference type="KEGG" id="aor:AO090023000309"/>
<dbReference type="VEuPathDB" id="FungiDB:AO090023000309"/>
<dbReference type="HOGENOM" id="CLU_065214_0_1_1"/>
<dbReference type="OMA" id="IHDSYSM"/>
<dbReference type="OrthoDB" id="46610at5052"/>
<dbReference type="Proteomes" id="UP000006564">
    <property type="component" value="Chromosome 3"/>
</dbReference>
<dbReference type="GO" id="GO:0070847">
    <property type="term" value="C:core mediator complex"/>
    <property type="evidence" value="ECO:0007669"/>
    <property type="project" value="TreeGrafter"/>
</dbReference>
<dbReference type="GO" id="GO:0016592">
    <property type="term" value="C:mediator complex"/>
    <property type="evidence" value="ECO:0007669"/>
    <property type="project" value="InterPro"/>
</dbReference>
<dbReference type="GO" id="GO:0003712">
    <property type="term" value="F:transcription coregulator activity"/>
    <property type="evidence" value="ECO:0007669"/>
    <property type="project" value="InterPro"/>
</dbReference>
<dbReference type="GO" id="GO:0006357">
    <property type="term" value="P:regulation of transcription by RNA polymerase II"/>
    <property type="evidence" value="ECO:0007669"/>
    <property type="project" value="InterPro"/>
</dbReference>
<dbReference type="Gene3D" id="6.10.140.1520">
    <property type="match status" value="1"/>
</dbReference>
<dbReference type="Gene3D" id="6.10.140.200">
    <property type="match status" value="1"/>
</dbReference>
<dbReference type="InterPro" id="IPR037212">
    <property type="entry name" value="Med7/Med21-like"/>
</dbReference>
<dbReference type="InterPro" id="IPR009244">
    <property type="entry name" value="Mediatior_Med7"/>
</dbReference>
<dbReference type="InterPro" id="IPR044888">
    <property type="entry name" value="Mediatior_Med7_sf"/>
</dbReference>
<dbReference type="PANTHER" id="PTHR21428">
    <property type="entry name" value="MEDIATOR OF RNA POLYMERASE II TRANSCRIPTION SUBUNIT 7"/>
    <property type="match status" value="1"/>
</dbReference>
<dbReference type="PANTHER" id="PTHR21428:SF11">
    <property type="entry name" value="MEDIATOR OF RNA POLYMERASE II TRANSCRIPTION SUBUNIT 7"/>
    <property type="match status" value="1"/>
</dbReference>
<dbReference type="Pfam" id="PF05983">
    <property type="entry name" value="Med7"/>
    <property type="match status" value="1"/>
</dbReference>
<dbReference type="SUPFAM" id="SSF140718">
    <property type="entry name" value="Mediator hinge subcomplex-like"/>
    <property type="match status" value="1"/>
</dbReference>
<sequence length="261" mass="29552">MADAGQQRPLTAFAPPPPLWKHFTPDNLKKLDEIKKNASKGEDGKPQKKKWTPTELRALDVPPELHFLVPPEIPKSGHYSVFGELQSLSTALPSLQDQGITQLYPSPPTGDADREQPSEPSQPLNHAYYLLKISKSLLLNFLEFVGILSVAPEQFESKVEDLRNLFINAHHLLNLYRPHQARESLILMMEEQLSRTREEIQQMDKLKEEITGALEQLKKDGVDVDAAPIEAPDNDTKKPNVSEEKAIEDTRLVWELLDENN</sequence>
<organism>
    <name type="scientific">Aspergillus oryzae (strain ATCC 42149 / RIB 40)</name>
    <name type="common">Yellow koji mold</name>
    <dbReference type="NCBI Taxonomy" id="510516"/>
    <lineage>
        <taxon>Eukaryota</taxon>
        <taxon>Fungi</taxon>
        <taxon>Dikarya</taxon>
        <taxon>Ascomycota</taxon>
        <taxon>Pezizomycotina</taxon>
        <taxon>Eurotiomycetes</taxon>
        <taxon>Eurotiomycetidae</taxon>
        <taxon>Eurotiales</taxon>
        <taxon>Aspergillaceae</taxon>
        <taxon>Aspergillus</taxon>
        <taxon>Aspergillus subgen. Circumdati</taxon>
    </lineage>
</organism>
<reference key="1">
    <citation type="journal article" date="2005" name="Nature">
        <title>Genome sequencing and analysis of Aspergillus oryzae.</title>
        <authorList>
            <person name="Machida M."/>
            <person name="Asai K."/>
            <person name="Sano M."/>
            <person name="Tanaka T."/>
            <person name="Kumagai T."/>
            <person name="Terai G."/>
            <person name="Kusumoto K."/>
            <person name="Arima T."/>
            <person name="Akita O."/>
            <person name="Kashiwagi Y."/>
            <person name="Abe K."/>
            <person name="Gomi K."/>
            <person name="Horiuchi H."/>
            <person name="Kitamoto K."/>
            <person name="Kobayashi T."/>
            <person name="Takeuchi M."/>
            <person name="Denning D.W."/>
            <person name="Galagan J.E."/>
            <person name="Nierman W.C."/>
            <person name="Yu J."/>
            <person name="Archer D.B."/>
            <person name="Bennett J.W."/>
            <person name="Bhatnagar D."/>
            <person name="Cleveland T.E."/>
            <person name="Fedorova N.D."/>
            <person name="Gotoh O."/>
            <person name="Horikawa H."/>
            <person name="Hosoyama A."/>
            <person name="Ichinomiya M."/>
            <person name="Igarashi R."/>
            <person name="Iwashita K."/>
            <person name="Juvvadi P.R."/>
            <person name="Kato M."/>
            <person name="Kato Y."/>
            <person name="Kin T."/>
            <person name="Kokubun A."/>
            <person name="Maeda H."/>
            <person name="Maeyama N."/>
            <person name="Maruyama J."/>
            <person name="Nagasaki H."/>
            <person name="Nakajima T."/>
            <person name="Oda K."/>
            <person name="Okada K."/>
            <person name="Paulsen I."/>
            <person name="Sakamoto K."/>
            <person name="Sawano T."/>
            <person name="Takahashi M."/>
            <person name="Takase K."/>
            <person name="Terabayashi Y."/>
            <person name="Wortman J.R."/>
            <person name="Yamada O."/>
            <person name="Yamagata Y."/>
            <person name="Anazawa H."/>
            <person name="Hata Y."/>
            <person name="Koide Y."/>
            <person name="Komori T."/>
            <person name="Koyama Y."/>
            <person name="Minetoki T."/>
            <person name="Suharnan S."/>
            <person name="Tanaka A."/>
            <person name="Isono K."/>
            <person name="Kuhara S."/>
            <person name="Ogasawara N."/>
            <person name="Kikuchi H."/>
        </authorList>
    </citation>
    <scope>NUCLEOTIDE SEQUENCE [LARGE SCALE GENOMIC DNA]</scope>
    <source>
        <strain>ATCC 42149 / RIB 40</strain>
    </source>
</reference>
<evidence type="ECO:0000250" key="1"/>
<evidence type="ECO:0000256" key="2">
    <source>
        <dbReference type="SAM" id="MobiDB-lite"/>
    </source>
</evidence>
<evidence type="ECO:0000305" key="3"/>
<comment type="function">
    <text evidence="1">Component of the Mediator complex, a coactivator involved in the regulated transcription of nearly all RNA polymerase II-dependent genes. Mediator functions as a bridge to convey information from gene-specific regulatory proteins to the basal RNA polymerase II transcription machinery. Mediator is recruited to promoters by direct interactions with regulatory proteins and serves as a scaffold for the assembly of a functional preinitiation complex with RNA polymerase II and the general transcription factors (By similarity).</text>
</comment>
<comment type="subunit">
    <text evidence="1">Component of the Mediator complex.</text>
</comment>
<comment type="subcellular location">
    <subcellularLocation>
        <location evidence="1">Nucleus</location>
    </subcellularLocation>
</comment>
<comment type="similarity">
    <text evidence="3">Belongs to the Mediator complex subunit 7 family.</text>
</comment>
<proteinExistence type="inferred from homology"/>